<protein>
    <recommendedName>
        <fullName>Metallothionein-1</fullName>
        <shortName>MT-1</shortName>
    </recommendedName>
    <alternativeName>
        <fullName>Metallothionein-I</fullName>
        <shortName>MT-I</shortName>
    </alternativeName>
</protein>
<proteinExistence type="inferred from homology"/>
<sequence length="60" mass="5999">MDPCDCAKTGTCNCGATCKCTNCQCKTCKKSCCPCCPSGCSKCASGCVCKGNSCGSSCCQ</sequence>
<accession>O13269</accession>
<gene>
    <name type="primary">mt1</name>
    <name type="synonym">mt</name>
</gene>
<name>MT1_CYPCA</name>
<feature type="chain" id="PRO_0000197279" description="Metallothionein-1">
    <location>
        <begin position="1"/>
        <end position="60"/>
    </location>
</feature>
<feature type="region of interest" description="Beta">
    <location>
        <begin position="1"/>
        <end position="28"/>
    </location>
</feature>
<feature type="region of interest" description="Alpha">
    <location>
        <begin position="29"/>
        <end position="60"/>
    </location>
</feature>
<feature type="binding site" evidence="2">
    <location>
        <position position="4"/>
    </location>
    <ligand>
        <name>a divalent metal cation</name>
        <dbReference type="ChEBI" id="CHEBI:60240"/>
        <label>1</label>
        <note>in cluster B</note>
    </ligand>
</feature>
<feature type="binding site" evidence="2">
    <location>
        <position position="6"/>
    </location>
    <ligand>
        <name>a divalent metal cation</name>
        <dbReference type="ChEBI" id="CHEBI:60240"/>
        <label>1</label>
        <note>in cluster B</note>
    </ligand>
</feature>
<feature type="binding site" evidence="2">
    <location>
        <position position="6"/>
    </location>
    <ligand>
        <name>a divalent metal cation</name>
        <dbReference type="ChEBI" id="CHEBI:60240"/>
        <label>2</label>
        <note>in cluster B</note>
    </ligand>
</feature>
<feature type="binding site" evidence="2">
    <location>
        <position position="12"/>
    </location>
    <ligand>
        <name>a divalent metal cation</name>
        <dbReference type="ChEBI" id="CHEBI:60240"/>
        <label>2</label>
        <note>in cluster B</note>
    </ligand>
</feature>
<feature type="binding site" evidence="2">
    <location>
        <position position="14"/>
    </location>
    <ligand>
        <name>a divalent metal cation</name>
        <dbReference type="ChEBI" id="CHEBI:60240"/>
        <label>2</label>
        <note>in cluster B</note>
    </ligand>
</feature>
<feature type="binding site" evidence="2">
    <location>
        <position position="14"/>
    </location>
    <ligand>
        <name>a divalent metal cation</name>
        <dbReference type="ChEBI" id="CHEBI:60240"/>
        <label>3</label>
        <note>in cluster B</note>
    </ligand>
</feature>
<feature type="binding site" evidence="2">
    <location>
        <position position="18"/>
    </location>
    <ligand>
        <name>a divalent metal cation</name>
        <dbReference type="ChEBI" id="CHEBI:60240"/>
        <label>3</label>
        <note>in cluster B</note>
    </ligand>
</feature>
<feature type="binding site" evidence="2">
    <location>
        <position position="20"/>
    </location>
    <ligand>
        <name>a divalent metal cation</name>
        <dbReference type="ChEBI" id="CHEBI:60240"/>
        <label>1</label>
        <note>in cluster B</note>
    </ligand>
</feature>
<feature type="binding site" evidence="2">
    <location>
        <position position="23"/>
    </location>
    <ligand>
        <name>a divalent metal cation</name>
        <dbReference type="ChEBI" id="CHEBI:60240"/>
        <label>1</label>
        <note>in cluster B</note>
    </ligand>
</feature>
<feature type="binding site" evidence="2">
    <location>
        <position position="23"/>
    </location>
    <ligand>
        <name>a divalent metal cation</name>
        <dbReference type="ChEBI" id="CHEBI:60240"/>
        <label>3</label>
        <note>in cluster B</note>
    </ligand>
</feature>
<feature type="binding site" evidence="2">
    <location>
        <position position="25"/>
    </location>
    <ligand>
        <name>a divalent metal cation</name>
        <dbReference type="ChEBI" id="CHEBI:60240"/>
        <label>2</label>
        <note>in cluster B</note>
    </ligand>
</feature>
<feature type="binding site" evidence="2">
    <location>
        <position position="28"/>
    </location>
    <ligand>
        <name>a divalent metal cation</name>
        <dbReference type="ChEBI" id="CHEBI:60240"/>
        <label>3</label>
        <note>in cluster B</note>
    </ligand>
</feature>
<feature type="binding site" evidence="2">
    <location>
        <position position="32"/>
    </location>
    <ligand>
        <name>a divalent metal cation</name>
        <dbReference type="ChEBI" id="CHEBI:60240"/>
        <label>4</label>
        <note>in cluster A</note>
    </ligand>
</feature>
<feature type="binding site" evidence="2">
    <location>
        <position position="33"/>
    </location>
    <ligand>
        <name>a divalent metal cation</name>
        <dbReference type="ChEBI" id="CHEBI:60240"/>
        <label>4</label>
        <note>in cluster A</note>
    </ligand>
</feature>
<feature type="binding site" evidence="2">
    <location>
        <position position="33"/>
    </location>
    <ligand>
        <name>a divalent metal cation</name>
        <dbReference type="ChEBI" id="CHEBI:60240"/>
        <label>5</label>
        <note>in cluster A</note>
    </ligand>
</feature>
<feature type="binding site" evidence="2">
    <location>
        <position position="35"/>
    </location>
    <ligand>
        <name>a divalent metal cation</name>
        <dbReference type="ChEBI" id="CHEBI:60240"/>
        <label>5</label>
        <note>in cluster A</note>
    </ligand>
</feature>
<feature type="binding site" evidence="2">
    <location>
        <position position="36"/>
    </location>
    <ligand>
        <name>a divalent metal cation</name>
        <dbReference type="ChEBI" id="CHEBI:60240"/>
        <label>5</label>
        <note>in cluster A</note>
    </ligand>
</feature>
<feature type="binding site" evidence="2">
    <location>
        <position position="36"/>
    </location>
    <ligand>
        <name>a divalent metal cation</name>
        <dbReference type="ChEBI" id="CHEBI:60240"/>
        <label>6</label>
        <note>in cluster A</note>
    </ligand>
</feature>
<feature type="binding site" evidence="2">
    <location>
        <position position="40"/>
    </location>
    <ligand>
        <name>a divalent metal cation</name>
        <dbReference type="ChEBI" id="CHEBI:60240"/>
        <label>6</label>
        <note>in cluster A</note>
    </ligand>
</feature>
<feature type="binding site" evidence="2">
    <location>
        <position position="43"/>
    </location>
    <ligand>
        <name>a divalent metal cation</name>
        <dbReference type="ChEBI" id="CHEBI:60240"/>
        <label>4</label>
        <note>in cluster A</note>
    </ligand>
</feature>
<feature type="binding site" evidence="2">
    <location>
        <position position="43"/>
    </location>
    <ligand>
        <name>a divalent metal cation</name>
        <dbReference type="ChEBI" id="CHEBI:60240"/>
        <label>6</label>
        <note>in cluster A</note>
    </ligand>
</feature>
<feature type="binding site" evidence="2">
    <location>
        <position position="47"/>
    </location>
    <ligand>
        <name>a divalent metal cation</name>
        <dbReference type="ChEBI" id="CHEBI:60240"/>
        <label>4</label>
        <note>in cluster A</note>
    </ligand>
</feature>
<feature type="binding site" evidence="2">
    <location>
        <position position="49"/>
    </location>
    <ligand>
        <name>a divalent metal cation</name>
        <dbReference type="ChEBI" id="CHEBI:60240"/>
        <label>5</label>
        <note>in cluster A</note>
    </ligand>
</feature>
<feature type="binding site" evidence="2">
    <location>
        <position position="49"/>
    </location>
    <ligand>
        <name>a divalent metal cation</name>
        <dbReference type="ChEBI" id="CHEBI:60240"/>
        <label>7</label>
        <note>in cluster A</note>
    </ligand>
</feature>
<feature type="binding site" evidence="3">
    <location>
        <position position="54"/>
    </location>
    <ligand>
        <name>a divalent metal cation</name>
        <dbReference type="ChEBI" id="CHEBI:60240"/>
        <label>7</label>
        <note>in cluster A</note>
    </ligand>
</feature>
<feature type="binding site" evidence="2">
    <location>
        <position position="58"/>
    </location>
    <ligand>
        <name>a divalent metal cation</name>
        <dbReference type="ChEBI" id="CHEBI:60240"/>
        <label>7</label>
        <note>in cluster A</note>
    </ligand>
</feature>
<feature type="binding site" evidence="2">
    <location>
        <position position="59"/>
    </location>
    <ligand>
        <name>a divalent metal cation</name>
        <dbReference type="ChEBI" id="CHEBI:60240"/>
        <label>6</label>
        <note>in cluster A</note>
    </ligand>
</feature>
<feature type="binding site" evidence="2">
    <location>
        <position position="59"/>
    </location>
    <ligand>
        <name>a divalent metal cation</name>
        <dbReference type="ChEBI" id="CHEBI:60240"/>
        <label>7</label>
        <note>in cluster A</note>
    </ligand>
</feature>
<comment type="function">
    <text evidence="1">Metallothioneins have a high content of cysteine residues that bind various heavy metals.</text>
</comment>
<comment type="domain">
    <text>Class I metallothioneins contain 2 metal-binding domains: four divalent ions are chelated within cluster A of the alpha domain and are coordinated via cysteinyl thiolate bridges to 11 cysteine ligands. Cluster B, the corresponding region within the beta domain, can ligate three divalent ions to 9 cysteines.</text>
</comment>
<comment type="similarity">
    <text evidence="4">Belongs to the metallothionein superfamily. Type 1 family.</text>
</comment>
<evidence type="ECO:0000250" key="1"/>
<evidence type="ECO:0000250" key="2">
    <source>
        <dbReference type="UniProtKB" id="P02795"/>
    </source>
</evidence>
<evidence type="ECO:0000250" key="3">
    <source>
        <dbReference type="UniProtKB" id="P62339"/>
    </source>
</evidence>
<evidence type="ECO:0000305" key="4"/>
<dbReference type="EMBL" id="AF002161">
    <property type="protein sequence ID" value="AAB61577.1"/>
    <property type="molecule type" value="mRNA"/>
</dbReference>
<dbReference type="EMBL" id="AF002162">
    <property type="protein sequence ID" value="AAB61578.1"/>
    <property type="molecule type" value="mRNA"/>
</dbReference>
<dbReference type="EMBL" id="AF001983">
    <property type="protein sequence ID" value="AAB70467.1"/>
    <property type="molecule type" value="Genomic_DNA"/>
</dbReference>
<dbReference type="SMR" id="O13269"/>
<dbReference type="Ensembl" id="ENSCCRT00010012251.1">
    <property type="protein sequence ID" value="ENSCCRP00010011250.1"/>
    <property type="gene ID" value="ENSCCRG00010004784.1"/>
</dbReference>
<dbReference type="Ensembl" id="ENSCCRT00015089409.1">
    <property type="protein sequence ID" value="ENSCCRP00015086608.1"/>
    <property type="gene ID" value="ENSCCRG00015034948.1"/>
</dbReference>
<dbReference type="Ensembl" id="ENSCCRT00020108092.1">
    <property type="protein sequence ID" value="ENSCCRP00020098859.1"/>
    <property type="gene ID" value="ENSCCRG00020045435.1"/>
</dbReference>
<dbReference type="GeneID" id="109080619"/>
<dbReference type="KEGG" id="ccar:109080619"/>
<dbReference type="CTD" id="17750"/>
<dbReference type="Proteomes" id="UP000694384">
    <property type="component" value="Unplaced"/>
</dbReference>
<dbReference type="Proteomes" id="UP000694427">
    <property type="component" value="Unplaced"/>
</dbReference>
<dbReference type="Proteomes" id="UP000694700">
    <property type="component" value="Unplaced"/>
</dbReference>
<dbReference type="Proteomes" id="UP000694701">
    <property type="component" value="Unplaced"/>
</dbReference>
<dbReference type="Proteomes" id="UP001155660">
    <property type="component" value="Chromosome B18"/>
</dbReference>
<dbReference type="GO" id="GO:0046872">
    <property type="term" value="F:metal ion binding"/>
    <property type="evidence" value="ECO:0007669"/>
    <property type="project" value="UniProtKB-KW"/>
</dbReference>
<dbReference type="FunFam" id="4.10.10.10:FF:000001">
    <property type="entry name" value="Metallothionein"/>
    <property type="match status" value="1"/>
</dbReference>
<dbReference type="Gene3D" id="4.10.10.10">
    <property type="entry name" value="Metallothionein Isoform II"/>
    <property type="match status" value="1"/>
</dbReference>
<dbReference type="InterPro" id="IPR017854">
    <property type="entry name" value="Metalthion_dom_sf"/>
</dbReference>
<dbReference type="InterPro" id="IPR023587">
    <property type="entry name" value="Metalthion_dom_sf_vert"/>
</dbReference>
<dbReference type="InterPro" id="IPR000006">
    <property type="entry name" value="Metalthion_vert"/>
</dbReference>
<dbReference type="InterPro" id="IPR018064">
    <property type="entry name" value="Metalthion_vert_metal_BS"/>
</dbReference>
<dbReference type="PANTHER" id="PTHR23299">
    <property type="entry name" value="METALLOTHIONEIN"/>
    <property type="match status" value="1"/>
</dbReference>
<dbReference type="PANTHER" id="PTHR23299:SF24">
    <property type="entry name" value="METALLOTHIONEIN-1X"/>
    <property type="match status" value="1"/>
</dbReference>
<dbReference type="Pfam" id="PF00131">
    <property type="entry name" value="Metallothio"/>
    <property type="match status" value="1"/>
</dbReference>
<dbReference type="PRINTS" id="PR00860">
    <property type="entry name" value="MTVERTEBRATE"/>
</dbReference>
<dbReference type="SUPFAM" id="SSF57868">
    <property type="entry name" value="Metallothionein"/>
    <property type="match status" value="1"/>
</dbReference>
<dbReference type="PROSITE" id="PS00203">
    <property type="entry name" value="METALLOTHIONEIN_VRT"/>
    <property type="match status" value="1"/>
</dbReference>
<keyword id="KW-0479">Metal-binding</keyword>
<keyword id="KW-0480">Metal-thiolate cluster</keyword>
<keyword id="KW-1185">Reference proteome</keyword>
<reference key="1">
    <citation type="submission" date="1997-09" db="EMBL/GenBank/DDBJ databases">
        <title>Common carp metallothionein gene.</title>
        <authorList>
            <person name="Shiu K.M."/>
            <person name="Chan P.C."/>
            <person name="Wong W.Y.F."/>
            <person name="Chan K.M."/>
        </authorList>
    </citation>
    <scope>NUCLEOTIDE SEQUENCE</scope>
</reference>
<organism>
    <name type="scientific">Cyprinus carpio</name>
    <name type="common">Common carp</name>
    <dbReference type="NCBI Taxonomy" id="7962"/>
    <lineage>
        <taxon>Eukaryota</taxon>
        <taxon>Metazoa</taxon>
        <taxon>Chordata</taxon>
        <taxon>Craniata</taxon>
        <taxon>Vertebrata</taxon>
        <taxon>Euteleostomi</taxon>
        <taxon>Actinopterygii</taxon>
        <taxon>Neopterygii</taxon>
        <taxon>Teleostei</taxon>
        <taxon>Ostariophysi</taxon>
        <taxon>Cypriniformes</taxon>
        <taxon>Cyprinidae</taxon>
        <taxon>Cyprininae</taxon>
        <taxon>Cyprinus</taxon>
    </lineage>
</organism>